<keyword id="KW-0064">Aspartyl protease</keyword>
<keyword id="KW-1003">Cell membrane</keyword>
<keyword id="KW-0378">Hydrolase</keyword>
<keyword id="KW-0472">Membrane</keyword>
<keyword id="KW-0645">Protease</keyword>
<keyword id="KW-1185">Reference proteome</keyword>
<keyword id="KW-0812">Transmembrane</keyword>
<keyword id="KW-1133">Transmembrane helix</keyword>
<dbReference type="EC" id="3.4.23.36" evidence="1"/>
<dbReference type="EMBL" id="CP000029">
    <property type="protein sequence ID" value="AAW54157.1"/>
    <property type="molecule type" value="Genomic_DNA"/>
</dbReference>
<dbReference type="RefSeq" id="WP_002457401.1">
    <property type="nucleotide sequence ID" value="NC_002976.3"/>
</dbReference>
<dbReference type="SMR" id="Q5HPZ5"/>
<dbReference type="STRING" id="176279.SERP0762"/>
<dbReference type="KEGG" id="ser:SERP0762"/>
<dbReference type="eggNOG" id="COG0597">
    <property type="taxonomic scope" value="Bacteria"/>
</dbReference>
<dbReference type="HOGENOM" id="CLU_083252_3_0_9"/>
<dbReference type="UniPathway" id="UPA00665"/>
<dbReference type="Proteomes" id="UP000000531">
    <property type="component" value="Chromosome"/>
</dbReference>
<dbReference type="GO" id="GO:0005886">
    <property type="term" value="C:plasma membrane"/>
    <property type="evidence" value="ECO:0007669"/>
    <property type="project" value="UniProtKB-SubCell"/>
</dbReference>
<dbReference type="GO" id="GO:0004190">
    <property type="term" value="F:aspartic-type endopeptidase activity"/>
    <property type="evidence" value="ECO:0007669"/>
    <property type="project" value="UniProtKB-UniRule"/>
</dbReference>
<dbReference type="GO" id="GO:0006508">
    <property type="term" value="P:proteolysis"/>
    <property type="evidence" value="ECO:0007669"/>
    <property type="project" value="UniProtKB-KW"/>
</dbReference>
<dbReference type="HAMAP" id="MF_00161">
    <property type="entry name" value="LspA"/>
    <property type="match status" value="1"/>
</dbReference>
<dbReference type="InterPro" id="IPR001872">
    <property type="entry name" value="Peptidase_A8"/>
</dbReference>
<dbReference type="NCBIfam" id="TIGR00077">
    <property type="entry name" value="lspA"/>
    <property type="match status" value="1"/>
</dbReference>
<dbReference type="PANTHER" id="PTHR33695">
    <property type="entry name" value="LIPOPROTEIN SIGNAL PEPTIDASE"/>
    <property type="match status" value="1"/>
</dbReference>
<dbReference type="PANTHER" id="PTHR33695:SF1">
    <property type="entry name" value="LIPOPROTEIN SIGNAL PEPTIDASE"/>
    <property type="match status" value="1"/>
</dbReference>
<dbReference type="Pfam" id="PF01252">
    <property type="entry name" value="Peptidase_A8"/>
    <property type="match status" value="1"/>
</dbReference>
<dbReference type="PRINTS" id="PR00781">
    <property type="entry name" value="LIPOSIGPTASE"/>
</dbReference>
<dbReference type="PROSITE" id="PS00855">
    <property type="entry name" value="SPASE_II"/>
    <property type="match status" value="1"/>
</dbReference>
<reference key="1">
    <citation type="journal article" date="2005" name="J. Bacteriol.">
        <title>Insights on evolution of virulence and resistance from the complete genome analysis of an early methicillin-resistant Staphylococcus aureus strain and a biofilm-producing methicillin-resistant Staphylococcus epidermidis strain.</title>
        <authorList>
            <person name="Gill S.R."/>
            <person name="Fouts D.E."/>
            <person name="Archer G.L."/>
            <person name="Mongodin E.F."/>
            <person name="DeBoy R.T."/>
            <person name="Ravel J."/>
            <person name="Paulsen I.T."/>
            <person name="Kolonay J.F."/>
            <person name="Brinkac L.M."/>
            <person name="Beanan M.J."/>
            <person name="Dodson R.J."/>
            <person name="Daugherty S.C."/>
            <person name="Madupu R."/>
            <person name="Angiuoli S.V."/>
            <person name="Durkin A.S."/>
            <person name="Haft D.H."/>
            <person name="Vamathevan J.J."/>
            <person name="Khouri H."/>
            <person name="Utterback T.R."/>
            <person name="Lee C."/>
            <person name="Dimitrov G."/>
            <person name="Jiang L."/>
            <person name="Qin H."/>
            <person name="Weidman J."/>
            <person name="Tran K."/>
            <person name="Kang K.H."/>
            <person name="Hance I.R."/>
            <person name="Nelson K.E."/>
            <person name="Fraser C.M."/>
        </authorList>
    </citation>
    <scope>NUCLEOTIDE SEQUENCE [LARGE SCALE GENOMIC DNA]</scope>
    <source>
        <strain>ATCC 35984 / DSM 28319 / BCRC 17069 / CCUG 31568 / BM 3577 / RP62A</strain>
    </source>
</reference>
<name>LSPA_STAEQ</name>
<feature type="chain" id="PRO_0000178821" description="Lipoprotein signal peptidase">
    <location>
        <begin position="1"/>
        <end position="161"/>
    </location>
</feature>
<feature type="transmembrane region" description="Helical" evidence="1">
    <location>
        <begin position="9"/>
        <end position="29"/>
    </location>
</feature>
<feature type="transmembrane region" description="Helical" evidence="1">
    <location>
        <begin position="63"/>
        <end position="83"/>
    </location>
</feature>
<feature type="transmembrane region" description="Helical" evidence="1">
    <location>
        <begin position="88"/>
        <end position="108"/>
    </location>
</feature>
<feature type="transmembrane region" description="Helical" evidence="1">
    <location>
        <begin position="131"/>
        <end position="151"/>
    </location>
</feature>
<feature type="active site" evidence="1">
    <location>
        <position position="118"/>
    </location>
</feature>
<feature type="active site" evidence="1">
    <location>
        <position position="136"/>
    </location>
</feature>
<protein>
    <recommendedName>
        <fullName evidence="1">Lipoprotein signal peptidase</fullName>
        <ecNumber evidence="1">3.4.23.36</ecNumber>
    </recommendedName>
    <alternativeName>
        <fullName evidence="1">Prolipoprotein signal peptidase</fullName>
    </alternativeName>
    <alternativeName>
        <fullName evidence="1">Signal peptidase II</fullName>
        <shortName evidence="1">SPase II</shortName>
    </alternativeName>
</protein>
<gene>
    <name evidence="1" type="primary">lspA</name>
    <name type="ordered locus">SERP0762</name>
</gene>
<sequence length="161" mass="18299">MKKKYYISISLLMTFIVLVFDQVSKWLITISMKVGDSYEIIPNFLNITSHRNNGAAWGILSGKMLFFYIITIIILIVLVIFYIKEAQFNLFMQVAISLLFAGALGNFIDRVLHGEVVDFIDTNIFGYDFPIFNIADSSLTIGVIFVIITLIKDAIINKKEV</sequence>
<proteinExistence type="inferred from homology"/>
<evidence type="ECO:0000255" key="1">
    <source>
        <dbReference type="HAMAP-Rule" id="MF_00161"/>
    </source>
</evidence>
<accession>Q5HPZ5</accession>
<comment type="function">
    <text evidence="1">This protein specifically catalyzes the removal of signal peptides from prolipoproteins.</text>
</comment>
<comment type="catalytic activity">
    <reaction evidence="1">
        <text>Release of signal peptides from bacterial membrane prolipoproteins. Hydrolyzes -Xaa-Yaa-Zaa-|-(S,diacylglyceryl)Cys-, in which Xaa is hydrophobic (preferably Leu), and Yaa (Ala or Ser) and Zaa (Gly or Ala) have small, neutral side chains.</text>
        <dbReference type="EC" id="3.4.23.36"/>
    </reaction>
</comment>
<comment type="pathway">
    <text evidence="1">Protein modification; lipoprotein biosynthesis (signal peptide cleavage).</text>
</comment>
<comment type="subcellular location">
    <subcellularLocation>
        <location evidence="1">Cell membrane</location>
        <topology evidence="1">Multi-pass membrane protein</topology>
    </subcellularLocation>
</comment>
<comment type="similarity">
    <text evidence="1">Belongs to the peptidase A8 family.</text>
</comment>
<organism>
    <name type="scientific">Staphylococcus epidermidis (strain ATCC 35984 / DSM 28319 / BCRC 17069 / CCUG 31568 / BM 3577 / RP62A)</name>
    <dbReference type="NCBI Taxonomy" id="176279"/>
    <lineage>
        <taxon>Bacteria</taxon>
        <taxon>Bacillati</taxon>
        <taxon>Bacillota</taxon>
        <taxon>Bacilli</taxon>
        <taxon>Bacillales</taxon>
        <taxon>Staphylococcaceae</taxon>
        <taxon>Staphylococcus</taxon>
    </lineage>
</organism>